<dbReference type="EMBL" id="CP000572">
    <property type="protein sequence ID" value="ABN92552.1"/>
    <property type="molecule type" value="Genomic_DNA"/>
</dbReference>
<dbReference type="RefSeq" id="WP_011854100.1">
    <property type="nucleotide sequence ID" value="NC_009076.1"/>
</dbReference>
<dbReference type="SMR" id="A3NYD0"/>
<dbReference type="KEGG" id="bpl:BURPS1106A_3113"/>
<dbReference type="HOGENOM" id="CLU_093757_0_0_4"/>
<dbReference type="Proteomes" id="UP000006738">
    <property type="component" value="Chromosome I"/>
</dbReference>
<dbReference type="GO" id="GO:0005737">
    <property type="term" value="C:cytoplasm"/>
    <property type="evidence" value="ECO:0007669"/>
    <property type="project" value="UniProtKB-SubCell"/>
</dbReference>
<dbReference type="GO" id="GO:0016151">
    <property type="term" value="F:nickel cation binding"/>
    <property type="evidence" value="ECO:0007669"/>
    <property type="project" value="UniProtKB-UniRule"/>
</dbReference>
<dbReference type="GO" id="GO:0051082">
    <property type="term" value="F:unfolded protein binding"/>
    <property type="evidence" value="ECO:0007669"/>
    <property type="project" value="UniProtKB-UniRule"/>
</dbReference>
<dbReference type="GO" id="GO:0006457">
    <property type="term" value="P:protein folding"/>
    <property type="evidence" value="ECO:0007669"/>
    <property type="project" value="InterPro"/>
</dbReference>
<dbReference type="GO" id="GO:0065003">
    <property type="term" value="P:protein-containing complex assembly"/>
    <property type="evidence" value="ECO:0007669"/>
    <property type="project" value="InterPro"/>
</dbReference>
<dbReference type="GO" id="GO:0019627">
    <property type="term" value="P:urea metabolic process"/>
    <property type="evidence" value="ECO:0007669"/>
    <property type="project" value="InterPro"/>
</dbReference>
<dbReference type="CDD" id="cd00571">
    <property type="entry name" value="UreE"/>
    <property type="match status" value="1"/>
</dbReference>
<dbReference type="Gene3D" id="2.60.260.20">
    <property type="entry name" value="Urease metallochaperone UreE, N-terminal domain"/>
    <property type="match status" value="1"/>
</dbReference>
<dbReference type="Gene3D" id="3.30.70.790">
    <property type="entry name" value="UreE, C-terminal domain"/>
    <property type="match status" value="1"/>
</dbReference>
<dbReference type="HAMAP" id="MF_00822">
    <property type="entry name" value="UreE"/>
    <property type="match status" value="1"/>
</dbReference>
<dbReference type="InterPro" id="IPR012406">
    <property type="entry name" value="UreE"/>
</dbReference>
<dbReference type="InterPro" id="IPR007864">
    <property type="entry name" value="UreE_C_dom"/>
</dbReference>
<dbReference type="InterPro" id="IPR004029">
    <property type="entry name" value="UreE_N"/>
</dbReference>
<dbReference type="InterPro" id="IPR036118">
    <property type="entry name" value="UreE_N_sf"/>
</dbReference>
<dbReference type="NCBIfam" id="NF009751">
    <property type="entry name" value="PRK13261.1-1"/>
    <property type="match status" value="1"/>
</dbReference>
<dbReference type="NCBIfam" id="NF009762">
    <property type="entry name" value="PRK13263.1"/>
    <property type="match status" value="1"/>
</dbReference>
<dbReference type="Pfam" id="PF05194">
    <property type="entry name" value="UreE_C"/>
    <property type="match status" value="1"/>
</dbReference>
<dbReference type="Pfam" id="PF02814">
    <property type="entry name" value="UreE_N"/>
    <property type="match status" value="1"/>
</dbReference>
<dbReference type="SMART" id="SM00988">
    <property type="entry name" value="UreE_N"/>
    <property type="match status" value="1"/>
</dbReference>
<dbReference type="SUPFAM" id="SSF69737">
    <property type="entry name" value="Urease metallochaperone UreE, C-terminal domain"/>
    <property type="match status" value="1"/>
</dbReference>
<dbReference type="SUPFAM" id="SSF69287">
    <property type="entry name" value="Urease metallochaperone UreE, N-terminal domain"/>
    <property type="match status" value="1"/>
</dbReference>
<comment type="function">
    <text evidence="1">Involved in urease metallocenter assembly. Binds nickel. Probably functions as a nickel donor during metallocenter assembly.</text>
</comment>
<comment type="subcellular location">
    <subcellularLocation>
        <location evidence="1">Cytoplasm</location>
    </subcellularLocation>
</comment>
<comment type="similarity">
    <text evidence="1">Belongs to the UreE family.</text>
</comment>
<evidence type="ECO:0000255" key="1">
    <source>
        <dbReference type="HAMAP-Rule" id="MF_00822"/>
    </source>
</evidence>
<evidence type="ECO:0000256" key="2">
    <source>
        <dbReference type="SAM" id="MobiDB-lite"/>
    </source>
</evidence>
<name>UREE_BURP0</name>
<gene>
    <name evidence="1" type="primary">ureE</name>
    <name type="ordered locus">BURPS1106A_3113</name>
</gene>
<keyword id="KW-0143">Chaperone</keyword>
<keyword id="KW-0963">Cytoplasm</keyword>
<keyword id="KW-0533">Nickel</keyword>
<keyword id="KW-0996">Nickel insertion</keyword>
<protein>
    <recommendedName>
        <fullName evidence="1">Urease accessory protein UreE</fullName>
    </recommendedName>
</protein>
<accession>A3NYD0</accession>
<reference key="1">
    <citation type="journal article" date="2010" name="Genome Biol. Evol.">
        <title>Continuing evolution of Burkholderia mallei through genome reduction and large-scale rearrangements.</title>
        <authorList>
            <person name="Losada L."/>
            <person name="Ronning C.M."/>
            <person name="DeShazer D."/>
            <person name="Woods D."/>
            <person name="Fedorova N."/>
            <person name="Kim H.S."/>
            <person name="Shabalina S.A."/>
            <person name="Pearson T.R."/>
            <person name="Brinkac L."/>
            <person name="Tan P."/>
            <person name="Nandi T."/>
            <person name="Crabtree J."/>
            <person name="Badger J."/>
            <person name="Beckstrom-Sternberg S."/>
            <person name="Saqib M."/>
            <person name="Schutzer S.E."/>
            <person name="Keim P."/>
            <person name="Nierman W.C."/>
        </authorList>
    </citation>
    <scope>NUCLEOTIDE SEQUENCE [LARGE SCALE GENOMIC DNA]</scope>
    <source>
        <strain>1106a</strain>
    </source>
</reference>
<proteinExistence type="inferred from homology"/>
<organism>
    <name type="scientific">Burkholderia pseudomallei (strain 1106a)</name>
    <dbReference type="NCBI Taxonomy" id="357348"/>
    <lineage>
        <taxon>Bacteria</taxon>
        <taxon>Pseudomonadati</taxon>
        <taxon>Pseudomonadota</taxon>
        <taxon>Betaproteobacteria</taxon>
        <taxon>Burkholderiales</taxon>
        <taxon>Burkholderiaceae</taxon>
        <taxon>Burkholderia</taxon>
        <taxon>pseudomallei group</taxon>
    </lineage>
</organism>
<sequence>MRTIDKRIAPNVRLAATLVARAPALTLAYDARCKSRLAATLDTGEDVALVLPRGTVLRDGDVLVADDGALVRVAAAHEAVLLVRAPDALTLTRAAYHLGNRHTPVEVGAGCLKLEYDPVLADMLTRLGATVERASAPFQPEAGAYGGGHRHGHDATFAEDYALAQQVFDEHHGHSHSHSHDHDHDHDHDHDHQHGPCCSHGHHHGHR</sequence>
<feature type="chain" id="PRO_1000083880" description="Urease accessory protein UreE">
    <location>
        <begin position="1"/>
        <end position="207"/>
    </location>
</feature>
<feature type="region of interest" description="Disordered" evidence="2">
    <location>
        <begin position="170"/>
        <end position="207"/>
    </location>
</feature>
<feature type="compositionally biased region" description="Basic and acidic residues" evidence="2">
    <location>
        <begin position="170"/>
        <end position="194"/>
    </location>
</feature>